<accession>C3NMT7</accession>
<comment type="similarity">
    <text evidence="1">Belongs to the eukaryotic ribosomal protein eL13 family.</text>
</comment>
<keyword id="KW-0687">Ribonucleoprotein</keyword>
<keyword id="KW-0689">Ribosomal protein</keyword>
<reference key="1">
    <citation type="journal article" date="2009" name="Proc. Natl. Acad. Sci. U.S.A.">
        <title>Biogeography of the Sulfolobus islandicus pan-genome.</title>
        <authorList>
            <person name="Reno M.L."/>
            <person name="Held N.L."/>
            <person name="Fields C.J."/>
            <person name="Burke P.V."/>
            <person name="Whitaker R.J."/>
        </authorList>
    </citation>
    <scope>NUCLEOTIDE SEQUENCE [LARGE SCALE GENOMIC DNA]</scope>
    <source>
        <strain>Y.N.15.51 / Yellowstone #2</strain>
    </source>
</reference>
<protein>
    <recommendedName>
        <fullName evidence="1">Large ribosomal subunit protein eL13</fullName>
    </recommendedName>
    <alternativeName>
        <fullName evidence="2">50S ribosomal protein L13e</fullName>
    </alternativeName>
</protein>
<name>RL13E_SACI1</name>
<dbReference type="EMBL" id="CP001404">
    <property type="protein sequence ID" value="ACP49744.1"/>
    <property type="molecule type" value="Genomic_DNA"/>
</dbReference>
<dbReference type="RefSeq" id="WP_012718116.1">
    <property type="nucleotide sequence ID" value="NC_012623.1"/>
</dbReference>
<dbReference type="SMR" id="C3NMT7"/>
<dbReference type="GeneID" id="7808834"/>
<dbReference type="KEGG" id="sin:YN1551_2841"/>
<dbReference type="HOGENOM" id="CLU_179008_0_0_2"/>
<dbReference type="Proteomes" id="UP000006818">
    <property type="component" value="Chromosome"/>
</dbReference>
<dbReference type="GO" id="GO:1990904">
    <property type="term" value="C:ribonucleoprotein complex"/>
    <property type="evidence" value="ECO:0007669"/>
    <property type="project" value="UniProtKB-KW"/>
</dbReference>
<dbReference type="GO" id="GO:0005840">
    <property type="term" value="C:ribosome"/>
    <property type="evidence" value="ECO:0007669"/>
    <property type="project" value="UniProtKB-KW"/>
</dbReference>
<dbReference type="GO" id="GO:0003735">
    <property type="term" value="F:structural constituent of ribosome"/>
    <property type="evidence" value="ECO:0007669"/>
    <property type="project" value="InterPro"/>
</dbReference>
<dbReference type="GO" id="GO:0006412">
    <property type="term" value="P:translation"/>
    <property type="evidence" value="ECO:0007669"/>
    <property type="project" value="UniProtKB-UniRule"/>
</dbReference>
<dbReference type="HAMAP" id="MF_00499">
    <property type="entry name" value="Ribosomal_eL13"/>
    <property type="match status" value="1"/>
</dbReference>
<dbReference type="InterPro" id="IPR001380">
    <property type="entry name" value="Ribosomal_eL13"/>
</dbReference>
<dbReference type="NCBIfam" id="NF008914">
    <property type="entry name" value="PRK12277.1"/>
    <property type="match status" value="1"/>
</dbReference>
<dbReference type="Pfam" id="PF01294">
    <property type="entry name" value="Ribosomal_L13e"/>
    <property type="match status" value="1"/>
</dbReference>
<organism>
    <name type="scientific">Saccharolobus islandicus (strain Y.N.15.51 / Yellowstone #2)</name>
    <name type="common">Sulfolobus islandicus</name>
    <dbReference type="NCBI Taxonomy" id="419942"/>
    <lineage>
        <taxon>Archaea</taxon>
        <taxon>Thermoproteota</taxon>
        <taxon>Thermoprotei</taxon>
        <taxon>Sulfolobales</taxon>
        <taxon>Sulfolobaceae</taxon>
        <taxon>Saccharolobus</taxon>
    </lineage>
</organism>
<feature type="chain" id="PRO_1000206487" description="Large ribosomal subunit protein eL13">
    <location>
        <begin position="1"/>
        <end position="79"/>
    </location>
</feature>
<proteinExistence type="inferred from homology"/>
<gene>
    <name evidence="1" type="primary">rpl13e</name>
    <name type="ordered locus">YN1551_2841</name>
</gene>
<evidence type="ECO:0000255" key="1">
    <source>
        <dbReference type="HAMAP-Rule" id="MF_00499"/>
    </source>
</evidence>
<evidence type="ECO:0000305" key="2"/>
<sequence>MEFPKALIKRPNYHFEHPHKRKDKRIGRGFSIGELEKAGLNINNARKLGIIVDIRRKSVHEENVEVLKKFLEQLSNQKS</sequence>